<accession>Q54WW3</accession>
<reference key="1">
    <citation type="journal article" date="2005" name="Nature">
        <title>The genome of the social amoeba Dictyostelium discoideum.</title>
        <authorList>
            <person name="Eichinger L."/>
            <person name="Pachebat J.A."/>
            <person name="Gloeckner G."/>
            <person name="Rajandream M.A."/>
            <person name="Sucgang R."/>
            <person name="Berriman M."/>
            <person name="Song J."/>
            <person name="Olsen R."/>
            <person name="Szafranski K."/>
            <person name="Xu Q."/>
            <person name="Tunggal B."/>
            <person name="Kummerfeld S."/>
            <person name="Madera M."/>
            <person name="Konfortov B.A."/>
            <person name="Rivero F."/>
            <person name="Bankier A.T."/>
            <person name="Lehmann R."/>
            <person name="Hamlin N."/>
            <person name="Davies R."/>
            <person name="Gaudet P."/>
            <person name="Fey P."/>
            <person name="Pilcher K."/>
            <person name="Chen G."/>
            <person name="Saunders D."/>
            <person name="Sodergren E.J."/>
            <person name="Davis P."/>
            <person name="Kerhornou A."/>
            <person name="Nie X."/>
            <person name="Hall N."/>
            <person name="Anjard C."/>
            <person name="Hemphill L."/>
            <person name="Bason N."/>
            <person name="Farbrother P."/>
            <person name="Desany B."/>
            <person name="Just E."/>
            <person name="Morio T."/>
            <person name="Rost R."/>
            <person name="Churcher C.M."/>
            <person name="Cooper J."/>
            <person name="Haydock S."/>
            <person name="van Driessche N."/>
            <person name="Cronin A."/>
            <person name="Goodhead I."/>
            <person name="Muzny D.M."/>
            <person name="Mourier T."/>
            <person name="Pain A."/>
            <person name="Lu M."/>
            <person name="Harper D."/>
            <person name="Lindsay R."/>
            <person name="Hauser H."/>
            <person name="James K.D."/>
            <person name="Quiles M."/>
            <person name="Madan Babu M."/>
            <person name="Saito T."/>
            <person name="Buchrieser C."/>
            <person name="Wardroper A."/>
            <person name="Felder M."/>
            <person name="Thangavelu M."/>
            <person name="Johnson D."/>
            <person name="Knights A."/>
            <person name="Loulseged H."/>
            <person name="Mungall K.L."/>
            <person name="Oliver K."/>
            <person name="Price C."/>
            <person name="Quail M.A."/>
            <person name="Urushihara H."/>
            <person name="Hernandez J."/>
            <person name="Rabbinowitsch E."/>
            <person name="Steffen D."/>
            <person name="Sanders M."/>
            <person name="Ma J."/>
            <person name="Kohara Y."/>
            <person name="Sharp S."/>
            <person name="Simmonds M.N."/>
            <person name="Spiegler S."/>
            <person name="Tivey A."/>
            <person name="Sugano S."/>
            <person name="White B."/>
            <person name="Walker D."/>
            <person name="Woodward J.R."/>
            <person name="Winckler T."/>
            <person name="Tanaka Y."/>
            <person name="Shaulsky G."/>
            <person name="Schleicher M."/>
            <person name="Weinstock G.M."/>
            <person name="Rosenthal A."/>
            <person name="Cox E.C."/>
            <person name="Chisholm R.L."/>
            <person name="Gibbs R.A."/>
            <person name="Loomis W.F."/>
            <person name="Platzer M."/>
            <person name="Kay R.R."/>
            <person name="Williams J.G."/>
            <person name="Dear P.H."/>
            <person name="Noegel A.A."/>
            <person name="Barrell B.G."/>
            <person name="Kuspa A."/>
        </authorList>
    </citation>
    <scope>NUCLEOTIDE SEQUENCE [LARGE SCALE GENOMIC DNA]</scope>
    <source>
        <strain>AX4</strain>
    </source>
</reference>
<keyword id="KW-0968">Cytoplasmic vesicle</keyword>
<keyword id="KW-0333">Golgi apparatus</keyword>
<keyword id="KW-0472">Membrane</keyword>
<keyword id="KW-0653">Protein transport</keyword>
<keyword id="KW-1185">Reference proteome</keyword>
<keyword id="KW-0813">Transport</keyword>
<protein>
    <recommendedName>
        <fullName>AP-1 complex subunit sigma-1</fullName>
    </recommendedName>
    <alternativeName>
        <fullName>Adaptor protein complex AP-1 subunit sigma-1A</fullName>
    </alternativeName>
    <alternativeName>
        <fullName>Adaptor-related protein complex 1 subunit sigma-1A</fullName>
    </alternativeName>
    <alternativeName>
        <fullName>Clathrin assembly protein complex 1 sigma-1A small chain</fullName>
    </alternativeName>
    <alternativeName>
        <fullName>Sigma 1a subunit of AP-1 clathrin</fullName>
    </alternativeName>
    <alternativeName>
        <fullName>Sigma-adaptin 1A</fullName>
    </alternativeName>
    <alternativeName>
        <fullName>Sigma1A-adaptin</fullName>
    </alternativeName>
</protein>
<evidence type="ECO:0000250" key="1"/>
<evidence type="ECO:0000305" key="2"/>
<proteinExistence type="inferred from homology"/>
<comment type="function">
    <text>Subunit of clathrin-associated adaptor protein complex 1 that plays a role in protein sorting in the trans-Golgi network (TGN) and endosomes. The AP complexes mediate the recruitment of clathrin to membranes and the recognition of sorting signals within the cytosolic tails of transmembrane cargo molecules. Also involved in early steps of phagocytosis and macropinocytosis.</text>
</comment>
<comment type="subunit">
    <text evidence="1">Adaptor protein complex 1 (AP-1) is a heterotetramer composed of two large adaptins (gamma-type subunit and beta-type subunit), a medium adaptin (mu-type subunit) and a small adaptin (sigma-type subunit).</text>
</comment>
<comment type="subcellular location">
    <subcellularLocation>
        <location>Golgi apparatus</location>
        <location>trans-Golgi network</location>
    </subcellularLocation>
    <subcellularLocation>
        <location evidence="1">Cytoplasmic vesicle</location>
        <location evidence="1">Clathrin-coated vesicle membrane</location>
    </subcellularLocation>
</comment>
<comment type="similarity">
    <text evidence="2">Belongs to the adaptor complexes small subunit family.</text>
</comment>
<organism>
    <name type="scientific">Dictyostelium discoideum</name>
    <name type="common">Social amoeba</name>
    <dbReference type="NCBI Taxonomy" id="44689"/>
    <lineage>
        <taxon>Eukaryota</taxon>
        <taxon>Amoebozoa</taxon>
        <taxon>Evosea</taxon>
        <taxon>Eumycetozoa</taxon>
        <taxon>Dictyostelia</taxon>
        <taxon>Dictyosteliales</taxon>
        <taxon>Dictyosteliaceae</taxon>
        <taxon>Dictyostelium</taxon>
    </lineage>
</organism>
<dbReference type="EMBL" id="AAFI02000030">
    <property type="protein sequence ID" value="EAL67828.1"/>
    <property type="molecule type" value="Genomic_DNA"/>
</dbReference>
<dbReference type="RefSeq" id="XP_641814.1">
    <property type="nucleotide sequence ID" value="XM_636722.1"/>
</dbReference>
<dbReference type="SMR" id="Q54WW3"/>
<dbReference type="FunCoup" id="Q54WW3">
    <property type="interactions" value="60"/>
</dbReference>
<dbReference type="STRING" id="44689.Q54WW3"/>
<dbReference type="PaxDb" id="44689-DDB0232337"/>
<dbReference type="EnsemblProtists" id="EAL67828">
    <property type="protein sequence ID" value="EAL67828"/>
    <property type="gene ID" value="DDB_G0279359"/>
</dbReference>
<dbReference type="GeneID" id="8622010"/>
<dbReference type="KEGG" id="ddi:DDB_G0279359"/>
<dbReference type="dictyBase" id="DDB_G0279359">
    <property type="gene designation" value="ap1s1"/>
</dbReference>
<dbReference type="VEuPathDB" id="AmoebaDB:DDB_G0279359"/>
<dbReference type="eggNOG" id="KOG0934">
    <property type="taxonomic scope" value="Eukaryota"/>
</dbReference>
<dbReference type="HOGENOM" id="CLU_061221_0_0_1"/>
<dbReference type="InParanoid" id="Q54WW3"/>
<dbReference type="OMA" id="IHFFATC"/>
<dbReference type="PhylomeDB" id="Q54WW3"/>
<dbReference type="Reactome" id="R-DDI-432720">
    <property type="pathway name" value="Lysosome Vesicle Biogenesis"/>
</dbReference>
<dbReference type="PRO" id="PR:Q54WW3"/>
<dbReference type="Proteomes" id="UP000002195">
    <property type="component" value="Chromosome 3"/>
</dbReference>
<dbReference type="GO" id="GO:0030121">
    <property type="term" value="C:AP-1 adaptor complex"/>
    <property type="evidence" value="ECO:0007669"/>
    <property type="project" value="InterPro"/>
</dbReference>
<dbReference type="GO" id="GO:0043231">
    <property type="term" value="C:intracellular membrane-bounded organelle"/>
    <property type="evidence" value="ECO:0000318"/>
    <property type="project" value="GO_Central"/>
</dbReference>
<dbReference type="GO" id="GO:0035615">
    <property type="term" value="F:clathrin adaptor activity"/>
    <property type="evidence" value="ECO:0007669"/>
    <property type="project" value="InterPro"/>
</dbReference>
<dbReference type="GO" id="GO:0015031">
    <property type="term" value="P:protein transport"/>
    <property type="evidence" value="ECO:0007669"/>
    <property type="project" value="UniProtKB-KW"/>
</dbReference>
<dbReference type="GO" id="GO:0016192">
    <property type="term" value="P:vesicle-mediated transport"/>
    <property type="evidence" value="ECO:0000318"/>
    <property type="project" value="GO_Central"/>
</dbReference>
<dbReference type="CDD" id="cd14831">
    <property type="entry name" value="AP1_sigma"/>
    <property type="match status" value="1"/>
</dbReference>
<dbReference type="FunFam" id="3.30.450.60:FF:000010">
    <property type="entry name" value="AP complex subunit sigma"/>
    <property type="match status" value="1"/>
</dbReference>
<dbReference type="Gene3D" id="3.30.450.60">
    <property type="match status" value="1"/>
</dbReference>
<dbReference type="InterPro" id="IPR044733">
    <property type="entry name" value="AP1_sigma"/>
</dbReference>
<dbReference type="InterPro" id="IPR016635">
    <property type="entry name" value="AP_complex_ssu"/>
</dbReference>
<dbReference type="InterPro" id="IPR022775">
    <property type="entry name" value="AP_mu_sigma_su"/>
</dbReference>
<dbReference type="InterPro" id="IPR011012">
    <property type="entry name" value="Longin-like_dom_sf"/>
</dbReference>
<dbReference type="PANTHER" id="PTHR11753">
    <property type="entry name" value="ADAPTOR COMPLEXES SMALL SUBUNIT FAMILY"/>
    <property type="match status" value="1"/>
</dbReference>
<dbReference type="Pfam" id="PF01217">
    <property type="entry name" value="Clat_adaptor_s"/>
    <property type="match status" value="1"/>
</dbReference>
<dbReference type="PIRSF" id="PIRSF015588">
    <property type="entry name" value="AP_complex_sigma"/>
    <property type="match status" value="1"/>
</dbReference>
<dbReference type="SUPFAM" id="SSF64356">
    <property type="entry name" value="SNARE-like"/>
    <property type="match status" value="1"/>
</dbReference>
<feature type="chain" id="PRO_0000328670" description="AP-1 complex subunit sigma-1">
    <location>
        <begin position="1"/>
        <end position="156"/>
    </location>
</feature>
<name>AP1S1_DICDI</name>
<gene>
    <name type="primary">ap1s1</name>
    <name type="ORF">DDB_G0279359</name>
</gene>
<sequence>MIHFLLCFNRQSKVRLSKFYSTYTPTEKNRATREVMNQVLSRSPKFCNFVQWREFTIVYQRFASLFFVMVTDSTDNELVTLESIQRFVVVLDIVFGNICELDLIYEFQRAYQVLDEFLLTGHLQESSSKEILRAINDAEGMEKSLLVAEVLDQHFL</sequence>